<keyword id="KW-0489">Methyltransferase</keyword>
<keyword id="KW-1185">Reference proteome</keyword>
<keyword id="KW-0949">S-adenosyl-L-methionine</keyword>
<keyword id="KW-0808">Transferase</keyword>
<protein>
    <recommendedName>
        <fullName evidence="1">Release factor glutamine methyltransferase</fullName>
        <shortName evidence="1">RF MTase</shortName>
        <ecNumber evidence="1">2.1.1.297</ecNumber>
    </recommendedName>
    <alternativeName>
        <fullName>M.MtuHHemKP</fullName>
    </alternativeName>
    <alternativeName>
        <fullName evidence="1">N5-glutamine methyltransferase PrmC</fullName>
    </alternativeName>
    <alternativeName>
        <fullName evidence="1">Protein-(glutamine-N5) MTase PrmC</fullName>
    </alternativeName>
    <alternativeName>
        <fullName evidence="1">Protein-glutamine N-methyltransferase PrmC</fullName>
    </alternativeName>
</protein>
<sequence>MTLRQAIDLAAALLAEAGVDSARCDAEQLAAHLAGTDRGRLPLFEPPGDEFFGRYRDIVTARARRVPLQHLIGTVSFGPVVLHVGPGVFVPRPETEAILAWATAQSLPARPLIVDACTGSGALAVALAQHRANLGLKARIIGIDDSDCALDYARRNAAGTPVELVRADVTTPRLLPELDGQVDLMVSNPPYIPDAAVLEPEVAQHDPHHALFGGPDGMTVISAVVGLAGRWLRPGGLFAVEHDDTTSSSTVDLVSSTKLFVDVQARKDLAGRPRFVTAMRWGHLPLAGENGAIDPRQRRCRAKR</sequence>
<name>PRMC_MYCTU</name>
<accession>P9WHV3</accession>
<accession>L0T6G3</accession>
<accession>Q10602</accession>
<proteinExistence type="evidence at protein level"/>
<evidence type="ECO:0000255" key="1">
    <source>
        <dbReference type="HAMAP-Rule" id="MF_02126"/>
    </source>
</evidence>
<evidence type="ECO:0000305" key="2"/>
<comment type="function">
    <text evidence="1">Methylates the class 1 translation termination release factors RF1/PrfA and RF2/PrfB on the glutamine residue of the universally conserved GGQ motif.</text>
</comment>
<comment type="catalytic activity">
    <reaction evidence="1">
        <text>L-glutaminyl-[peptide chain release factor] + S-adenosyl-L-methionine = N(5)-methyl-L-glutaminyl-[peptide chain release factor] + S-adenosyl-L-homocysteine + H(+)</text>
        <dbReference type="Rhea" id="RHEA:42896"/>
        <dbReference type="Rhea" id="RHEA-COMP:10271"/>
        <dbReference type="Rhea" id="RHEA-COMP:10272"/>
        <dbReference type="ChEBI" id="CHEBI:15378"/>
        <dbReference type="ChEBI" id="CHEBI:30011"/>
        <dbReference type="ChEBI" id="CHEBI:57856"/>
        <dbReference type="ChEBI" id="CHEBI:59789"/>
        <dbReference type="ChEBI" id="CHEBI:61891"/>
        <dbReference type="EC" id="2.1.1.297"/>
    </reaction>
</comment>
<comment type="miscellaneous">
    <text>Was identified as a high-confidence drug target.</text>
</comment>
<comment type="similarity">
    <text evidence="1">Belongs to the protein N5-glutamine methyltransferase family. PrmC subfamily.</text>
</comment>
<comment type="sequence caution" evidence="2">
    <conflict type="erroneous initiation">
        <sequence resource="EMBL-CDS" id="CCP44057"/>
    </conflict>
    <text>Extended N-terminus.</text>
</comment>
<gene>
    <name evidence="1" type="primary">prmC</name>
    <name type="synonym">hemK</name>
    <name type="ordered locus">Rv1300</name>
    <name type="ORF">MTCY373.20</name>
</gene>
<organism>
    <name type="scientific">Mycobacterium tuberculosis (strain ATCC 25618 / H37Rv)</name>
    <dbReference type="NCBI Taxonomy" id="83332"/>
    <lineage>
        <taxon>Bacteria</taxon>
        <taxon>Bacillati</taxon>
        <taxon>Actinomycetota</taxon>
        <taxon>Actinomycetes</taxon>
        <taxon>Mycobacteriales</taxon>
        <taxon>Mycobacteriaceae</taxon>
        <taxon>Mycobacterium</taxon>
        <taxon>Mycobacterium tuberculosis complex</taxon>
    </lineage>
</organism>
<reference key="1">
    <citation type="journal article" date="1998" name="Nature">
        <title>Deciphering the biology of Mycobacterium tuberculosis from the complete genome sequence.</title>
        <authorList>
            <person name="Cole S.T."/>
            <person name="Brosch R."/>
            <person name="Parkhill J."/>
            <person name="Garnier T."/>
            <person name="Churcher C.M."/>
            <person name="Harris D.E."/>
            <person name="Gordon S.V."/>
            <person name="Eiglmeier K."/>
            <person name="Gas S."/>
            <person name="Barry C.E. III"/>
            <person name="Tekaia F."/>
            <person name="Badcock K."/>
            <person name="Basham D."/>
            <person name="Brown D."/>
            <person name="Chillingworth T."/>
            <person name="Connor R."/>
            <person name="Davies R.M."/>
            <person name="Devlin K."/>
            <person name="Feltwell T."/>
            <person name="Gentles S."/>
            <person name="Hamlin N."/>
            <person name="Holroyd S."/>
            <person name="Hornsby T."/>
            <person name="Jagels K."/>
            <person name="Krogh A."/>
            <person name="McLean J."/>
            <person name="Moule S."/>
            <person name="Murphy L.D."/>
            <person name="Oliver S."/>
            <person name="Osborne J."/>
            <person name="Quail M.A."/>
            <person name="Rajandream M.A."/>
            <person name="Rogers J."/>
            <person name="Rutter S."/>
            <person name="Seeger K."/>
            <person name="Skelton S."/>
            <person name="Squares S."/>
            <person name="Squares R."/>
            <person name="Sulston J.E."/>
            <person name="Taylor K."/>
            <person name="Whitehead S."/>
            <person name="Barrell B.G."/>
        </authorList>
    </citation>
    <scope>NUCLEOTIDE SEQUENCE [LARGE SCALE GENOMIC DNA]</scope>
    <source>
        <strain>ATCC 25618 / H37Rv</strain>
    </source>
</reference>
<reference key="2">
    <citation type="journal article" date="2008" name="BMC Syst. Biol.">
        <title>targetTB: a target identification pipeline for Mycobacterium tuberculosis through an interactome, reactome and genome-scale structural analysis.</title>
        <authorList>
            <person name="Raman K."/>
            <person name="Yeturu K."/>
            <person name="Chandra N."/>
        </authorList>
    </citation>
    <scope>IDENTIFICATION AS A DRUG TARGET [LARGE SCALE ANALYSIS]</scope>
</reference>
<reference key="3">
    <citation type="journal article" date="2011" name="Mol. Cell. Proteomics">
        <title>Proteogenomic analysis of Mycobacterium tuberculosis by high resolution mass spectrometry.</title>
        <authorList>
            <person name="Kelkar D.S."/>
            <person name="Kumar D."/>
            <person name="Kumar P."/>
            <person name="Balakrishnan L."/>
            <person name="Muthusamy B."/>
            <person name="Yadav A.K."/>
            <person name="Shrivastava P."/>
            <person name="Marimuthu A."/>
            <person name="Anand S."/>
            <person name="Sundaram H."/>
            <person name="Kingsbury R."/>
            <person name="Harsha H.C."/>
            <person name="Nair B."/>
            <person name="Prasad T.S."/>
            <person name="Chauhan D.S."/>
            <person name="Katoch K."/>
            <person name="Katoch V.M."/>
            <person name="Kumar P."/>
            <person name="Chaerkady R."/>
            <person name="Ramachandran S."/>
            <person name="Dash D."/>
            <person name="Pandey A."/>
        </authorList>
    </citation>
    <scope>IDENTIFICATION BY MASS SPECTROMETRY [LARGE SCALE ANALYSIS]</scope>
    <source>
        <strain>ATCC 25618 / H37Rv</strain>
    </source>
</reference>
<feature type="chain" id="PRO_0000157166" description="Release factor glutamine methyltransferase">
    <location>
        <begin position="1"/>
        <end position="304"/>
    </location>
</feature>
<feature type="binding site" evidence="1">
    <location>
        <position position="144"/>
    </location>
    <ligand>
        <name>S-adenosyl-L-methionine</name>
        <dbReference type="ChEBI" id="CHEBI:59789"/>
    </ligand>
</feature>
<feature type="binding site" evidence="1">
    <location>
        <begin position="188"/>
        <end position="191"/>
    </location>
    <ligand>
        <name>substrate</name>
    </ligand>
</feature>
<feature type="binding site" evidence="1">
    <location>
        <position position="188"/>
    </location>
    <ligand>
        <name>S-adenosyl-L-methionine</name>
        <dbReference type="ChEBI" id="CHEBI:59789"/>
    </ligand>
</feature>
<dbReference type="EC" id="2.1.1.297" evidence="1"/>
<dbReference type="EMBL" id="AL123456">
    <property type="protein sequence ID" value="CCP44057.1"/>
    <property type="status" value="ALT_INIT"/>
    <property type="molecule type" value="Genomic_DNA"/>
</dbReference>
<dbReference type="PIR" id="H70773">
    <property type="entry name" value="H70773"/>
</dbReference>
<dbReference type="RefSeq" id="NP_215816.1">
    <property type="nucleotide sequence ID" value="NC_000962.3"/>
</dbReference>
<dbReference type="RefSeq" id="WP_003911420.1">
    <property type="nucleotide sequence ID" value="NC_000962.3"/>
</dbReference>
<dbReference type="RefSeq" id="WP_003916325.1">
    <property type="nucleotide sequence ID" value="NZ_NVQJ01000030.1"/>
</dbReference>
<dbReference type="SMR" id="P9WHV3"/>
<dbReference type="FunCoup" id="P9WHV3">
    <property type="interactions" value="366"/>
</dbReference>
<dbReference type="STRING" id="83332.Rv1300"/>
<dbReference type="PaxDb" id="83332-Rv1300"/>
<dbReference type="DNASU" id="886950"/>
<dbReference type="GeneID" id="886950"/>
<dbReference type="KEGG" id="mtu:Rv1300"/>
<dbReference type="PATRIC" id="fig|83332.12.peg.1457"/>
<dbReference type="TubercuList" id="Rv1300"/>
<dbReference type="eggNOG" id="COG2890">
    <property type="taxonomic scope" value="Bacteria"/>
</dbReference>
<dbReference type="InParanoid" id="P9WHV3"/>
<dbReference type="OrthoDB" id="9800643at2"/>
<dbReference type="Proteomes" id="UP000001584">
    <property type="component" value="Chromosome"/>
</dbReference>
<dbReference type="GO" id="GO:0003676">
    <property type="term" value="F:nucleic acid binding"/>
    <property type="evidence" value="ECO:0007669"/>
    <property type="project" value="InterPro"/>
</dbReference>
<dbReference type="GO" id="GO:0102559">
    <property type="term" value="F:protein-(glutamine-N5) methyltransferase activity"/>
    <property type="evidence" value="ECO:0007669"/>
    <property type="project" value="UniProtKB-EC"/>
</dbReference>
<dbReference type="GO" id="GO:0036009">
    <property type="term" value="F:protein-glutamine N-methyltransferase activity"/>
    <property type="evidence" value="ECO:0000318"/>
    <property type="project" value="GO_Central"/>
</dbReference>
<dbReference type="GO" id="GO:0032259">
    <property type="term" value="P:methylation"/>
    <property type="evidence" value="ECO:0007669"/>
    <property type="project" value="UniProtKB-KW"/>
</dbReference>
<dbReference type="GO" id="GO:0006415">
    <property type="term" value="P:translational termination"/>
    <property type="evidence" value="ECO:0000318"/>
    <property type="project" value="GO_Central"/>
</dbReference>
<dbReference type="CDD" id="cd02440">
    <property type="entry name" value="AdoMet_MTases"/>
    <property type="match status" value="1"/>
</dbReference>
<dbReference type="Gene3D" id="1.10.8.10">
    <property type="entry name" value="DNA helicase RuvA subunit, C-terminal domain"/>
    <property type="match status" value="1"/>
</dbReference>
<dbReference type="Gene3D" id="3.40.50.150">
    <property type="entry name" value="Vaccinia Virus protein VP39"/>
    <property type="match status" value="1"/>
</dbReference>
<dbReference type="HAMAP" id="MF_02126">
    <property type="entry name" value="RF_methyltr_PrmC"/>
    <property type="match status" value="1"/>
</dbReference>
<dbReference type="InterPro" id="IPR002052">
    <property type="entry name" value="DNA_methylase_N6_adenine_CS"/>
</dbReference>
<dbReference type="InterPro" id="IPR004556">
    <property type="entry name" value="HemK-like"/>
</dbReference>
<dbReference type="InterPro" id="IPR041698">
    <property type="entry name" value="Methyltransf_25"/>
</dbReference>
<dbReference type="InterPro" id="IPR050320">
    <property type="entry name" value="N5-glutamine_MTase"/>
</dbReference>
<dbReference type="InterPro" id="IPR040758">
    <property type="entry name" value="PrmC_N"/>
</dbReference>
<dbReference type="InterPro" id="IPR019874">
    <property type="entry name" value="RF_methyltr_PrmC"/>
</dbReference>
<dbReference type="InterPro" id="IPR029063">
    <property type="entry name" value="SAM-dependent_MTases_sf"/>
</dbReference>
<dbReference type="NCBIfam" id="TIGR00536">
    <property type="entry name" value="hemK_fam"/>
    <property type="match status" value="1"/>
</dbReference>
<dbReference type="PANTHER" id="PTHR18895">
    <property type="entry name" value="HEMK METHYLTRANSFERASE"/>
    <property type="match status" value="1"/>
</dbReference>
<dbReference type="PANTHER" id="PTHR18895:SF74">
    <property type="entry name" value="MTRF1L RELEASE FACTOR GLUTAMINE METHYLTRANSFERASE"/>
    <property type="match status" value="1"/>
</dbReference>
<dbReference type="Pfam" id="PF13649">
    <property type="entry name" value="Methyltransf_25"/>
    <property type="match status" value="1"/>
</dbReference>
<dbReference type="Pfam" id="PF17827">
    <property type="entry name" value="PrmC_N"/>
    <property type="match status" value="1"/>
</dbReference>
<dbReference type="SUPFAM" id="SSF53335">
    <property type="entry name" value="S-adenosyl-L-methionine-dependent methyltransferases"/>
    <property type="match status" value="1"/>
</dbReference>